<reference key="1">
    <citation type="journal article" date="1985" name="Gene">
        <title>Nucleotide sequence and genome organization of bacteriophage S13 DNA.</title>
        <authorList>
            <person name="Lau P.C.K."/>
            <person name="Spencer J.H."/>
        </authorList>
    </citation>
    <scope>NUCLEOTIDE SEQUENCE [GENOMIC DNA]</scope>
</reference>
<gene>
    <name type="primary">K</name>
</gene>
<accession>P69595</accession>
<accession>P03653</accession>
<feature type="chain" id="PRO_0000164913" description="K protein">
    <location>
        <begin position="1"/>
        <end position="56"/>
    </location>
</feature>
<sequence length="56" mass="6392">MSRKIILIKQELLLLVYELNRSGLLAENEKIRPILAQLEKLLLCDLSPSTNDSVKN</sequence>
<organismHost>
    <name type="scientific">Salmonella</name>
    <dbReference type="NCBI Taxonomy" id="590"/>
</organismHost>
<keyword id="KW-1185">Reference proteome</keyword>
<protein>
    <recommendedName>
        <fullName>K protein</fullName>
    </recommendedName>
</protein>
<name>VGK_BPS13</name>
<organism>
    <name type="scientific">Enterobacteria phage S13</name>
    <name type="common">Bacteriophage S13</name>
    <dbReference type="NCBI Taxonomy" id="10844"/>
    <lineage>
        <taxon>Viruses</taxon>
        <taxon>Monodnaviria</taxon>
        <taxon>Sangervirae</taxon>
        <taxon>Phixviricota</taxon>
        <taxon>Malgrandaviricetes</taxon>
        <taxon>Petitvirales</taxon>
        <taxon>Microviridae</taxon>
        <taxon>Bullavirinae</taxon>
        <taxon>Sinsheimervirus</taxon>
        <taxon>Escherichia phage phiX174</taxon>
        <taxon>Escherichia phage phiX174</taxon>
    </lineage>
</organism>
<comment type="function">
    <text>No function has yet been ascribed to K protein.</text>
</comment>
<comment type="miscellaneous">
    <text>Gene K overlaps genes B, A, and C.</text>
</comment>
<proteinExistence type="predicted"/>
<dbReference type="EMBL" id="M14428">
    <property type="protein sequence ID" value="AAA32585.1"/>
    <property type="molecule type" value="Genomic_DNA"/>
</dbReference>
<dbReference type="PIR" id="JS0452">
    <property type="entry name" value="JS0452"/>
</dbReference>
<dbReference type="SMR" id="P69595"/>
<dbReference type="Proteomes" id="UP000002129">
    <property type="component" value="Segment"/>
</dbReference>
<dbReference type="InterPro" id="IPR020962">
    <property type="entry name" value="Phage_phiX174_GpK"/>
</dbReference>
<dbReference type="Pfam" id="PF12283">
    <property type="entry name" value="Protein_K"/>
    <property type="match status" value="1"/>
</dbReference>